<organism>
    <name type="scientific">Escherichia coli (strain K12)</name>
    <dbReference type="NCBI Taxonomy" id="83333"/>
    <lineage>
        <taxon>Bacteria</taxon>
        <taxon>Pseudomonadati</taxon>
        <taxon>Pseudomonadota</taxon>
        <taxon>Gammaproteobacteria</taxon>
        <taxon>Enterobacterales</taxon>
        <taxon>Enterobacteriaceae</taxon>
        <taxon>Escherichia</taxon>
    </lineage>
</organism>
<keyword id="KW-1185">Reference proteome</keyword>
<proteinExistence type="evidence at protein level"/>
<feature type="chain" id="PRO_0000175979" description="UPF0178 protein YaiI">
    <location>
        <begin position="1"/>
        <end position="152"/>
    </location>
</feature>
<protein>
    <recommendedName>
        <fullName>UPF0178 protein YaiI</fullName>
    </recommendedName>
</protein>
<name>YAII_ECOLI</name>
<sequence>MTIWVDADACPNVIKEILYRAAERMQMPLVLVANQSLRVPPSRFIRTLRVAAGFDVADNEIVRQCEAGDLVITADIPLAAEAIEKGAAALNPRGERYTPATIRERLTMRDFMDTLRASGIQTGGPDSLSQRDRQAFAAELEKWWLEVQRSRG</sequence>
<evidence type="ECO:0000305" key="1"/>
<reference key="1">
    <citation type="submission" date="1997-01" db="EMBL/GenBank/DDBJ databases">
        <title>Sequence of minutes 4-25 of Escherichia coli.</title>
        <authorList>
            <person name="Chung E."/>
            <person name="Allen E."/>
            <person name="Araujo R."/>
            <person name="Aparicio A.M."/>
            <person name="Davis K."/>
            <person name="Duncan M."/>
            <person name="Federspiel N."/>
            <person name="Hyman R."/>
            <person name="Kalman S."/>
            <person name="Komp C."/>
            <person name="Kurdi O."/>
            <person name="Lew H."/>
            <person name="Lin D."/>
            <person name="Namath A."/>
            <person name="Oefner P."/>
            <person name="Roberts D."/>
            <person name="Schramm S."/>
            <person name="Davis R.W."/>
        </authorList>
    </citation>
    <scope>NUCLEOTIDE SEQUENCE [LARGE SCALE GENOMIC DNA]</scope>
    <source>
        <strain>K12 / MG1655 / ATCC 47076</strain>
    </source>
</reference>
<reference key="2">
    <citation type="journal article" date="1997" name="Science">
        <title>The complete genome sequence of Escherichia coli K-12.</title>
        <authorList>
            <person name="Blattner F.R."/>
            <person name="Plunkett G. III"/>
            <person name="Bloch C.A."/>
            <person name="Perna N.T."/>
            <person name="Burland V."/>
            <person name="Riley M."/>
            <person name="Collado-Vides J."/>
            <person name="Glasner J.D."/>
            <person name="Rode C.K."/>
            <person name="Mayhew G.F."/>
            <person name="Gregor J."/>
            <person name="Davis N.W."/>
            <person name="Kirkpatrick H.A."/>
            <person name="Goeden M.A."/>
            <person name="Rose D.J."/>
            <person name="Mau B."/>
            <person name="Shao Y."/>
        </authorList>
    </citation>
    <scope>NUCLEOTIDE SEQUENCE [LARGE SCALE GENOMIC DNA]</scope>
    <source>
        <strain>K12 / MG1655 / ATCC 47076</strain>
    </source>
</reference>
<reference key="3">
    <citation type="journal article" date="2006" name="Mol. Syst. Biol.">
        <title>Highly accurate genome sequences of Escherichia coli K-12 strains MG1655 and W3110.</title>
        <authorList>
            <person name="Hayashi K."/>
            <person name="Morooka N."/>
            <person name="Yamamoto Y."/>
            <person name="Fujita K."/>
            <person name="Isono K."/>
            <person name="Choi S."/>
            <person name="Ohtsubo E."/>
            <person name="Baba T."/>
            <person name="Wanner B.L."/>
            <person name="Mori H."/>
            <person name="Horiuchi T."/>
        </authorList>
    </citation>
    <scope>NUCLEOTIDE SEQUENCE [LARGE SCALE GENOMIC DNA]</scope>
    <source>
        <strain>K12 / W3110 / ATCC 27325 / DSM 5911</strain>
    </source>
</reference>
<reference key="4">
    <citation type="submission" date="1995-10" db="EMBL/GenBank/DDBJ databases">
        <authorList>
            <person name="Robison K."/>
            <person name="O'Keeffe T."/>
            <person name="Church G.M."/>
        </authorList>
    </citation>
    <scope>NUCLEOTIDE SEQUENCE [GENOMIC DNA] OF 1-134</scope>
    <source>
        <strain>K12 / EMG2</strain>
    </source>
</reference>
<reference key="5">
    <citation type="journal article" date="1986" name="Biochem. J.">
        <title>The cloning and expression of the aroL gene from Escherichia coli K12. Purification and complete amino acid sequence of shikimate kinase II, the aroL-gene product.</title>
        <authorList>
            <person name="Millar G."/>
            <person name="Lewendon A."/>
            <person name="Hunter M.G."/>
            <person name="Coggins J.R."/>
        </authorList>
    </citation>
    <scope>NUCLEOTIDE SEQUENCE [GENOMIC DNA] OF 120-152</scope>
    <source>
        <strain>K12</strain>
    </source>
</reference>
<dbReference type="EMBL" id="U73857">
    <property type="protein sequence ID" value="AAB18111.1"/>
    <property type="molecule type" value="Genomic_DNA"/>
</dbReference>
<dbReference type="EMBL" id="U00096">
    <property type="protein sequence ID" value="AAC73490.2"/>
    <property type="molecule type" value="Genomic_DNA"/>
</dbReference>
<dbReference type="EMBL" id="AP009048">
    <property type="protein sequence ID" value="BAE76168.1"/>
    <property type="molecule type" value="Genomic_DNA"/>
</dbReference>
<dbReference type="EMBL" id="U39483">
    <property type="protein sequence ID" value="AAA83266.1"/>
    <property type="status" value="ALT_INIT"/>
    <property type="molecule type" value="Genomic_DNA"/>
</dbReference>
<dbReference type="EMBL" id="X04064">
    <property type="status" value="NOT_ANNOTATED_CDS"/>
    <property type="molecule type" value="Genomic_DNA"/>
</dbReference>
<dbReference type="PIR" id="C64767">
    <property type="entry name" value="C64767"/>
</dbReference>
<dbReference type="RefSeq" id="NP_414921.2">
    <property type="nucleotide sequence ID" value="NC_000913.3"/>
</dbReference>
<dbReference type="RefSeq" id="WP_000158159.1">
    <property type="nucleotide sequence ID" value="NZ_SSZK01000009.1"/>
</dbReference>
<dbReference type="BioGRID" id="4259829">
    <property type="interactions" value="25"/>
</dbReference>
<dbReference type="BioGRID" id="849424">
    <property type="interactions" value="5"/>
</dbReference>
<dbReference type="FunCoup" id="P0A8D3">
    <property type="interactions" value="84"/>
</dbReference>
<dbReference type="IntAct" id="P0A8D3">
    <property type="interactions" value="9"/>
</dbReference>
<dbReference type="STRING" id="511145.b0387"/>
<dbReference type="jPOST" id="P0A8D3"/>
<dbReference type="PaxDb" id="511145-b0387"/>
<dbReference type="EnsemblBacteria" id="AAC73490">
    <property type="protein sequence ID" value="AAC73490"/>
    <property type="gene ID" value="b0387"/>
</dbReference>
<dbReference type="GeneID" id="945033"/>
<dbReference type="KEGG" id="ecj:JW0378"/>
<dbReference type="KEGG" id="eco:b0387"/>
<dbReference type="KEGG" id="ecoc:C3026_01875"/>
<dbReference type="PATRIC" id="fig|511145.12.peg.399"/>
<dbReference type="EchoBASE" id="EB2968"/>
<dbReference type="eggNOG" id="COG1671">
    <property type="taxonomic scope" value="Bacteria"/>
</dbReference>
<dbReference type="HOGENOM" id="CLU_106619_2_1_6"/>
<dbReference type="InParanoid" id="P0A8D3"/>
<dbReference type="OMA" id="CPVKDEI"/>
<dbReference type="OrthoDB" id="9798918at2"/>
<dbReference type="PhylomeDB" id="P0A8D3"/>
<dbReference type="BioCyc" id="EcoCyc:G6230-MONOMER"/>
<dbReference type="PRO" id="PR:P0A8D3"/>
<dbReference type="Proteomes" id="UP000000625">
    <property type="component" value="Chromosome"/>
</dbReference>
<dbReference type="CDD" id="cd18720">
    <property type="entry name" value="PIN_YqxD-like"/>
    <property type="match status" value="1"/>
</dbReference>
<dbReference type="HAMAP" id="MF_00489">
    <property type="entry name" value="UPF0178"/>
    <property type="match status" value="1"/>
</dbReference>
<dbReference type="InterPro" id="IPR003791">
    <property type="entry name" value="UPF0178"/>
</dbReference>
<dbReference type="NCBIfam" id="NF001095">
    <property type="entry name" value="PRK00124.1"/>
    <property type="match status" value="1"/>
</dbReference>
<dbReference type="PANTHER" id="PTHR35146">
    <property type="entry name" value="UPF0178 PROTEIN YAII"/>
    <property type="match status" value="1"/>
</dbReference>
<dbReference type="PANTHER" id="PTHR35146:SF1">
    <property type="entry name" value="UPF0178 PROTEIN YAII"/>
    <property type="match status" value="1"/>
</dbReference>
<dbReference type="Pfam" id="PF02639">
    <property type="entry name" value="DUF188"/>
    <property type="match status" value="1"/>
</dbReference>
<gene>
    <name type="primary">yaiI</name>
    <name type="ordered locus">b0387</name>
    <name type="ordered locus">JW0378</name>
</gene>
<accession>P0A8D3</accession>
<accession>P52088</accession>
<accession>P75703</accession>
<accession>Q2MC38</accession>
<accession>Q8XEB0</accession>
<comment type="interaction">
    <interactant intactId="EBI-1116378">
        <id>P0A8D3</id>
    </interactant>
    <interactant intactId="EBI-1119239">
        <id>P77390</id>
        <label>citC</label>
    </interactant>
    <organismsDiffer>false</organismsDiffer>
    <experiments>2</experiments>
</comment>
<comment type="similarity">
    <text evidence="1">Belongs to the UPF0178 family.</text>
</comment>
<comment type="sequence caution" evidence="1">
    <conflict type="erroneous initiation">
        <sequence resource="EMBL-CDS" id="AAA83266"/>
    </conflict>
    <text>Extended N-terminus.</text>
</comment>